<reference key="1">
    <citation type="journal article" date="2006" name="Proc. Natl. Acad. Sci. U.S.A.">
        <title>Genome sequence of Synechococcus CC9311: insights into adaptation to a coastal environment.</title>
        <authorList>
            <person name="Palenik B."/>
            <person name="Ren Q."/>
            <person name="Dupont C.L."/>
            <person name="Myers G.S."/>
            <person name="Heidelberg J.F."/>
            <person name="Badger J.H."/>
            <person name="Madupu R."/>
            <person name="Nelson W.C."/>
            <person name="Brinkac L.M."/>
            <person name="Dodson R.J."/>
            <person name="Durkin A.S."/>
            <person name="Daugherty S.C."/>
            <person name="Sullivan S.A."/>
            <person name="Khouri H."/>
            <person name="Mohamoud Y."/>
            <person name="Halpin R."/>
            <person name="Paulsen I.T."/>
        </authorList>
    </citation>
    <scope>NUCLEOTIDE SEQUENCE [LARGE SCALE GENOMIC DNA]</scope>
    <source>
        <strain>CC9311</strain>
    </source>
</reference>
<comment type="function">
    <text evidence="1">Located at the top of the head of the 30S subunit, it contacts several helices of the 16S rRNA. In the 70S ribosome it contacts the 23S rRNA (bridge B1a) and protein L5 of the 50S subunit (bridge B1b), connecting the 2 subunits; these bridges are implicated in subunit movement. Contacts the tRNAs in the A and P-sites.</text>
</comment>
<comment type="subunit">
    <text evidence="1">Part of the 30S ribosomal subunit. Forms a loose heterodimer with protein S19. Forms two bridges to the 50S subunit in the 70S ribosome.</text>
</comment>
<comment type="similarity">
    <text evidence="1">Belongs to the universal ribosomal protein uS13 family.</text>
</comment>
<accession>Q0ID26</accession>
<evidence type="ECO:0000255" key="1">
    <source>
        <dbReference type="HAMAP-Rule" id="MF_01315"/>
    </source>
</evidence>
<evidence type="ECO:0000256" key="2">
    <source>
        <dbReference type="SAM" id="MobiDB-lite"/>
    </source>
</evidence>
<evidence type="ECO:0000305" key="3"/>
<gene>
    <name evidence="1" type="primary">rpsM</name>
    <name evidence="1" type="synonym">rps13</name>
    <name type="ordered locus">sync_0416</name>
</gene>
<organism>
    <name type="scientific">Synechococcus sp. (strain CC9311)</name>
    <dbReference type="NCBI Taxonomy" id="64471"/>
    <lineage>
        <taxon>Bacteria</taxon>
        <taxon>Bacillati</taxon>
        <taxon>Cyanobacteriota</taxon>
        <taxon>Cyanophyceae</taxon>
        <taxon>Synechococcales</taxon>
        <taxon>Synechococcaceae</taxon>
        <taxon>Synechococcus</taxon>
    </lineage>
</organism>
<keyword id="KW-1185">Reference proteome</keyword>
<keyword id="KW-0687">Ribonucleoprotein</keyword>
<keyword id="KW-0689">Ribosomal protein</keyword>
<keyword id="KW-0694">RNA-binding</keyword>
<keyword id="KW-0699">rRNA-binding</keyword>
<keyword id="KW-0820">tRNA-binding</keyword>
<protein>
    <recommendedName>
        <fullName evidence="1">Small ribosomal subunit protein uS13</fullName>
    </recommendedName>
    <alternativeName>
        <fullName evidence="3">30S ribosomal protein S13</fullName>
    </alternativeName>
</protein>
<dbReference type="EMBL" id="CP000435">
    <property type="protein sequence ID" value="ABI46073.1"/>
    <property type="molecule type" value="Genomic_DNA"/>
</dbReference>
<dbReference type="RefSeq" id="WP_006854808.1">
    <property type="nucleotide sequence ID" value="NC_008319.1"/>
</dbReference>
<dbReference type="SMR" id="Q0ID26"/>
<dbReference type="STRING" id="64471.sync_0416"/>
<dbReference type="KEGG" id="syg:sync_0416"/>
<dbReference type="eggNOG" id="COG0099">
    <property type="taxonomic scope" value="Bacteria"/>
</dbReference>
<dbReference type="HOGENOM" id="CLU_103849_1_2_3"/>
<dbReference type="OrthoDB" id="9803610at2"/>
<dbReference type="Proteomes" id="UP000001961">
    <property type="component" value="Chromosome"/>
</dbReference>
<dbReference type="GO" id="GO:0005829">
    <property type="term" value="C:cytosol"/>
    <property type="evidence" value="ECO:0007669"/>
    <property type="project" value="TreeGrafter"/>
</dbReference>
<dbReference type="GO" id="GO:0015935">
    <property type="term" value="C:small ribosomal subunit"/>
    <property type="evidence" value="ECO:0007669"/>
    <property type="project" value="TreeGrafter"/>
</dbReference>
<dbReference type="GO" id="GO:0019843">
    <property type="term" value="F:rRNA binding"/>
    <property type="evidence" value="ECO:0007669"/>
    <property type="project" value="UniProtKB-UniRule"/>
</dbReference>
<dbReference type="GO" id="GO:0003735">
    <property type="term" value="F:structural constituent of ribosome"/>
    <property type="evidence" value="ECO:0007669"/>
    <property type="project" value="InterPro"/>
</dbReference>
<dbReference type="GO" id="GO:0000049">
    <property type="term" value="F:tRNA binding"/>
    <property type="evidence" value="ECO:0007669"/>
    <property type="project" value="UniProtKB-UniRule"/>
</dbReference>
<dbReference type="GO" id="GO:0006412">
    <property type="term" value="P:translation"/>
    <property type="evidence" value="ECO:0007669"/>
    <property type="project" value="UniProtKB-UniRule"/>
</dbReference>
<dbReference type="FunFam" id="1.10.8.50:FF:000001">
    <property type="entry name" value="30S ribosomal protein S13"/>
    <property type="match status" value="1"/>
</dbReference>
<dbReference type="Gene3D" id="1.10.8.50">
    <property type="match status" value="1"/>
</dbReference>
<dbReference type="Gene3D" id="4.10.910.10">
    <property type="entry name" value="30s ribosomal protein s13, domain 2"/>
    <property type="match status" value="1"/>
</dbReference>
<dbReference type="HAMAP" id="MF_01315">
    <property type="entry name" value="Ribosomal_uS13"/>
    <property type="match status" value="1"/>
</dbReference>
<dbReference type="InterPro" id="IPR027437">
    <property type="entry name" value="Rbsml_uS13_C"/>
</dbReference>
<dbReference type="InterPro" id="IPR001892">
    <property type="entry name" value="Ribosomal_uS13"/>
</dbReference>
<dbReference type="InterPro" id="IPR010979">
    <property type="entry name" value="Ribosomal_uS13-like_H2TH"/>
</dbReference>
<dbReference type="InterPro" id="IPR019980">
    <property type="entry name" value="Ribosomal_uS13_bac-type"/>
</dbReference>
<dbReference type="InterPro" id="IPR018269">
    <property type="entry name" value="Ribosomal_uS13_CS"/>
</dbReference>
<dbReference type="NCBIfam" id="TIGR03631">
    <property type="entry name" value="uS13_bact"/>
    <property type="match status" value="1"/>
</dbReference>
<dbReference type="PANTHER" id="PTHR10871">
    <property type="entry name" value="30S RIBOSOMAL PROTEIN S13/40S RIBOSOMAL PROTEIN S18"/>
    <property type="match status" value="1"/>
</dbReference>
<dbReference type="PANTHER" id="PTHR10871:SF1">
    <property type="entry name" value="SMALL RIBOSOMAL SUBUNIT PROTEIN US13M"/>
    <property type="match status" value="1"/>
</dbReference>
<dbReference type="Pfam" id="PF00416">
    <property type="entry name" value="Ribosomal_S13"/>
    <property type="match status" value="1"/>
</dbReference>
<dbReference type="PIRSF" id="PIRSF002134">
    <property type="entry name" value="Ribosomal_S13"/>
    <property type="match status" value="1"/>
</dbReference>
<dbReference type="SUPFAM" id="SSF46946">
    <property type="entry name" value="S13-like H2TH domain"/>
    <property type="match status" value="1"/>
</dbReference>
<dbReference type="PROSITE" id="PS00646">
    <property type="entry name" value="RIBOSOMAL_S13_1"/>
    <property type="match status" value="1"/>
</dbReference>
<dbReference type="PROSITE" id="PS50159">
    <property type="entry name" value="RIBOSOMAL_S13_2"/>
    <property type="match status" value="1"/>
</dbReference>
<feature type="chain" id="PRO_0000306728" description="Small ribosomal subunit protein uS13">
    <location>
        <begin position="1"/>
        <end position="121"/>
    </location>
</feature>
<feature type="region of interest" description="Disordered" evidence="2">
    <location>
        <begin position="97"/>
        <end position="121"/>
    </location>
</feature>
<feature type="compositionally biased region" description="Basic residues" evidence="2">
    <location>
        <begin position="100"/>
        <end position="121"/>
    </location>
</feature>
<sequence>MARIAGVDIPRDKRIEVALTYIYGIGSTRAKTILTKAGVNPDIRVKDLEDNDVQKLRNATESFTIEGDLRRQEGMALKRLQDIGCLRGRRHRMSLPVRGQRTRTNARTRRGARKTVAGKKK</sequence>
<proteinExistence type="inferred from homology"/>
<name>RS13_SYNS3</name>